<proteinExistence type="inferred from homology"/>
<evidence type="ECO:0000255" key="1">
    <source>
        <dbReference type="HAMAP-Rule" id="MF_00469"/>
    </source>
</evidence>
<evidence type="ECO:0000256" key="2">
    <source>
        <dbReference type="SAM" id="MobiDB-lite"/>
    </source>
</evidence>
<gene>
    <name evidence="1" type="primary">trhO</name>
    <name type="ordered locus">PSPA7_4661</name>
</gene>
<keyword id="KW-0560">Oxidoreductase</keyword>
<keyword id="KW-0819">tRNA processing</keyword>
<reference key="1">
    <citation type="submission" date="2007-06" db="EMBL/GenBank/DDBJ databases">
        <authorList>
            <person name="Dodson R.J."/>
            <person name="Harkins D."/>
            <person name="Paulsen I.T."/>
        </authorList>
    </citation>
    <scope>NUCLEOTIDE SEQUENCE [LARGE SCALE GENOMIC DNA]</scope>
    <source>
        <strain>DSM 24068 / PA7</strain>
    </source>
</reference>
<comment type="function">
    <text evidence="1">Catalyzes oxygen-dependent 5-hydroxyuridine (ho5U) modification at position 34 in tRNAs.</text>
</comment>
<comment type="catalytic activity">
    <reaction evidence="1">
        <text>uridine(34) in tRNA + AH2 + O2 = 5-hydroxyuridine(34) in tRNA + A + H2O</text>
        <dbReference type="Rhea" id="RHEA:64224"/>
        <dbReference type="Rhea" id="RHEA-COMP:11727"/>
        <dbReference type="Rhea" id="RHEA-COMP:13381"/>
        <dbReference type="ChEBI" id="CHEBI:13193"/>
        <dbReference type="ChEBI" id="CHEBI:15377"/>
        <dbReference type="ChEBI" id="CHEBI:15379"/>
        <dbReference type="ChEBI" id="CHEBI:17499"/>
        <dbReference type="ChEBI" id="CHEBI:65315"/>
        <dbReference type="ChEBI" id="CHEBI:136877"/>
    </reaction>
</comment>
<comment type="similarity">
    <text evidence="1">Belongs to the TrhO family.</text>
</comment>
<dbReference type="EC" id="1.14.-.-" evidence="1"/>
<dbReference type="EMBL" id="CP000744">
    <property type="protein sequence ID" value="ABR82167.1"/>
    <property type="molecule type" value="Genomic_DNA"/>
</dbReference>
<dbReference type="RefSeq" id="WP_003151945.1">
    <property type="nucleotide sequence ID" value="NC_009656.1"/>
</dbReference>
<dbReference type="SMR" id="A6VAC0"/>
<dbReference type="GeneID" id="77222578"/>
<dbReference type="KEGG" id="pap:PSPA7_4661"/>
<dbReference type="HOGENOM" id="CLU_038878_0_0_6"/>
<dbReference type="Proteomes" id="UP000001582">
    <property type="component" value="Chromosome"/>
</dbReference>
<dbReference type="GO" id="GO:0016705">
    <property type="term" value="F:oxidoreductase activity, acting on paired donors, with incorporation or reduction of molecular oxygen"/>
    <property type="evidence" value="ECO:0007669"/>
    <property type="project" value="UniProtKB-UniRule"/>
</dbReference>
<dbReference type="GO" id="GO:0006400">
    <property type="term" value="P:tRNA modification"/>
    <property type="evidence" value="ECO:0007669"/>
    <property type="project" value="UniProtKB-UniRule"/>
</dbReference>
<dbReference type="CDD" id="cd01518">
    <property type="entry name" value="RHOD_YceA"/>
    <property type="match status" value="1"/>
</dbReference>
<dbReference type="Gene3D" id="3.30.70.100">
    <property type="match status" value="1"/>
</dbReference>
<dbReference type="Gene3D" id="3.40.250.10">
    <property type="entry name" value="Rhodanese-like domain"/>
    <property type="match status" value="1"/>
</dbReference>
<dbReference type="HAMAP" id="MF_00469">
    <property type="entry name" value="TrhO"/>
    <property type="match status" value="1"/>
</dbReference>
<dbReference type="InterPro" id="IPR001763">
    <property type="entry name" value="Rhodanese-like_dom"/>
</dbReference>
<dbReference type="InterPro" id="IPR036873">
    <property type="entry name" value="Rhodanese-like_dom_sf"/>
</dbReference>
<dbReference type="InterPro" id="IPR020936">
    <property type="entry name" value="TrhO"/>
</dbReference>
<dbReference type="InterPro" id="IPR040503">
    <property type="entry name" value="TRHO_N"/>
</dbReference>
<dbReference type="NCBIfam" id="NF001136">
    <property type="entry name" value="PRK00142.1-4"/>
    <property type="match status" value="1"/>
</dbReference>
<dbReference type="PANTHER" id="PTHR43268:SF3">
    <property type="entry name" value="RHODANESE-LIKE DOMAIN-CONTAINING PROTEIN 7-RELATED"/>
    <property type="match status" value="1"/>
</dbReference>
<dbReference type="PANTHER" id="PTHR43268">
    <property type="entry name" value="THIOSULFATE SULFURTRANSFERASE/RHODANESE-LIKE DOMAIN-CONTAINING PROTEIN 2"/>
    <property type="match status" value="1"/>
</dbReference>
<dbReference type="Pfam" id="PF00581">
    <property type="entry name" value="Rhodanese"/>
    <property type="match status" value="1"/>
</dbReference>
<dbReference type="Pfam" id="PF17773">
    <property type="entry name" value="UPF0176_N"/>
    <property type="match status" value="1"/>
</dbReference>
<dbReference type="SMART" id="SM00450">
    <property type="entry name" value="RHOD"/>
    <property type="match status" value="1"/>
</dbReference>
<dbReference type="SUPFAM" id="SSF52821">
    <property type="entry name" value="Rhodanese/Cell cycle control phosphatase"/>
    <property type="match status" value="1"/>
</dbReference>
<dbReference type="PROSITE" id="PS50206">
    <property type="entry name" value="RHODANESE_3"/>
    <property type="match status" value="1"/>
</dbReference>
<sequence>MTSIVVAALYKFVTLDDYVALREPLLQTLLDNGVKGTLLLAEEGINGTVSGSREGIDALFAWLRSDPRLADIEHKESYCDEQPFYRTKVKLKKEIVTLGVPGVDPNKRVGQYVEAKDWNALISDPEVLLIDTRNDYEVAIGTFEGAVDPKTRSFREFPEYIKAHYDPARHKKVAMFCTGGIRCEKASSYMLGAGFEEVFHLRGGILKYLEEVPQEQSLWRGDCFVFDNRVTVRHDLSEGEYDQCHACRNPVSVEDRQSEHYVPGISCPHCWDSLSEKTRAGARERQKQIELARQRNQPHPLGRDPRQSTLEN</sequence>
<name>TRHO_PSEP7</name>
<accession>A6VAC0</accession>
<feature type="chain" id="PRO_1000060370" description="tRNA uridine(34) hydroxylase">
    <location>
        <begin position="1"/>
        <end position="312"/>
    </location>
</feature>
<feature type="domain" description="Rhodanese" evidence="1">
    <location>
        <begin position="123"/>
        <end position="217"/>
    </location>
</feature>
<feature type="region of interest" description="Disordered" evidence="2">
    <location>
        <begin position="282"/>
        <end position="312"/>
    </location>
</feature>
<feature type="compositionally biased region" description="Basic and acidic residues" evidence="2">
    <location>
        <begin position="282"/>
        <end position="293"/>
    </location>
</feature>
<feature type="active site" description="Cysteine persulfide intermediate" evidence="1">
    <location>
        <position position="177"/>
    </location>
</feature>
<organism>
    <name type="scientific">Pseudomonas paraeruginosa (strain DSM 24068 / PA7)</name>
    <name type="common">Pseudomonas aeruginosa (strain PA7)</name>
    <dbReference type="NCBI Taxonomy" id="381754"/>
    <lineage>
        <taxon>Bacteria</taxon>
        <taxon>Pseudomonadati</taxon>
        <taxon>Pseudomonadota</taxon>
        <taxon>Gammaproteobacteria</taxon>
        <taxon>Pseudomonadales</taxon>
        <taxon>Pseudomonadaceae</taxon>
        <taxon>Pseudomonas</taxon>
        <taxon>Pseudomonas paraeruginosa</taxon>
    </lineage>
</organism>
<protein>
    <recommendedName>
        <fullName evidence="1">tRNA uridine(34) hydroxylase</fullName>
        <ecNumber evidence="1">1.14.-.-</ecNumber>
    </recommendedName>
    <alternativeName>
        <fullName evidence="1">tRNA hydroxylation protein O</fullName>
    </alternativeName>
</protein>